<sequence length="257" mass="29675">MKKTAFILLLFIALTWTTSPLVNGSEKSEEINEKDLRKKSELQGAALGNLKQIYYYNEKAKTENKESHDQFLQHTILFKGFFTNHSWYNDLLVDFDSKDIVDKYKGKKVDLYGAYYGYQCAGGTPNKTACMYGGVTLHDNNRLTEEKKVPINLWLDGKQNTVPLETVKTNKKNVTVQELDLQARRYLQEKYNLYNSDVFDGKVQRGLIVFHTSTEPSVNYDLFGAQGQNSNTLLRIYRDNKTINSENMHIDIYLYTS</sequence>
<name>ETXA_STAAE</name>
<comment type="function">
    <text evidence="1">Staphylococcal enterotoxin that activates the host immune system by binding as unprocessed molecules to major histocompatibility (MHC) complex class II and T-cell receptor (TCR) molecules. In turn, waves of cellular activation, cytokine production, and migration into the lung tissue and airways occur via alphabeta T-cells. Also causes the intoxication staphylococcal food poisoning syndrome. The illness is characterized by high fever, hypotension, diarrhea, shock, and in some cases death.</text>
</comment>
<comment type="cofactor">
    <cofactor evidence="1">
        <name>Zn(2+)</name>
        <dbReference type="ChEBI" id="CHEBI:29105"/>
    </cofactor>
    <text evidence="1">Binds 1 zinc ion per subunit. The zinc ion is necessary for the toxin interaction with MHC class II.</text>
</comment>
<comment type="subunit">
    <text evidence="1">Monomer. Interacts with MHC class II molecules alpha/HLA-DRB1 and beta/HLA-DRA chains. The interaction with MHC-II molecules occurs at both zinc-dependent and zinc-independent sites. Interacts with T-cell receptor beta variable 7-9/TRBV7-9.</text>
</comment>
<comment type="subcellular location">
    <subcellularLocation>
        <location evidence="1">Secreted</location>
    </subcellularLocation>
</comment>
<comment type="similarity">
    <text evidence="3">Belongs to the staphylococcal/streptococcal toxin family.</text>
</comment>
<protein>
    <recommendedName>
        <fullName>Enterotoxin type A</fullName>
    </recommendedName>
</protein>
<gene>
    <name type="primary">sea</name>
    <name type="ordered locus">NWMN_1883</name>
</gene>
<proteinExistence type="inferred from homology"/>
<keyword id="KW-1015">Disulfide bond</keyword>
<keyword id="KW-0260">Enterotoxin</keyword>
<keyword id="KW-0479">Metal-binding</keyword>
<keyword id="KW-0964">Secreted</keyword>
<keyword id="KW-0732">Signal</keyword>
<keyword id="KW-0766">Superantigen</keyword>
<keyword id="KW-0800">Toxin</keyword>
<keyword id="KW-0843">Virulence</keyword>
<keyword id="KW-0862">Zinc</keyword>
<dbReference type="EMBL" id="AP009351">
    <property type="protein sequence ID" value="BAF68155.1"/>
    <property type="molecule type" value="Genomic_DNA"/>
</dbReference>
<dbReference type="RefSeq" id="WP_000750406.1">
    <property type="nucleotide sequence ID" value="NZ_JBBIAE010000010.1"/>
</dbReference>
<dbReference type="SMR" id="A0A0H3KHN8"/>
<dbReference type="KEGG" id="sae:NWMN_1883"/>
<dbReference type="HOGENOM" id="CLU_093855_0_0_9"/>
<dbReference type="Proteomes" id="UP000006386">
    <property type="component" value="Chromosome"/>
</dbReference>
<dbReference type="GO" id="GO:0005576">
    <property type="term" value="C:extracellular region"/>
    <property type="evidence" value="ECO:0007669"/>
    <property type="project" value="UniProtKB-SubCell"/>
</dbReference>
<dbReference type="GO" id="GO:0046872">
    <property type="term" value="F:metal ion binding"/>
    <property type="evidence" value="ECO:0007669"/>
    <property type="project" value="UniProtKB-KW"/>
</dbReference>
<dbReference type="GO" id="GO:0090729">
    <property type="term" value="F:toxin activity"/>
    <property type="evidence" value="ECO:0007669"/>
    <property type="project" value="UniProtKB-KW"/>
</dbReference>
<dbReference type="Gene3D" id="2.40.50.110">
    <property type="match status" value="1"/>
</dbReference>
<dbReference type="Gene3D" id="3.10.20.120">
    <property type="match status" value="1"/>
</dbReference>
<dbReference type="InterPro" id="IPR008992">
    <property type="entry name" value="Enterotoxin"/>
</dbReference>
<dbReference type="InterPro" id="IPR006126">
    <property type="entry name" value="Staph/Strept_toxin_CS"/>
</dbReference>
<dbReference type="InterPro" id="IPR006173">
    <property type="entry name" value="Staph_tox_OB"/>
</dbReference>
<dbReference type="InterPro" id="IPR016091">
    <property type="entry name" value="SuperAg_toxin_C"/>
</dbReference>
<dbReference type="InterPro" id="IPR013307">
    <property type="entry name" value="Superantigen_bac"/>
</dbReference>
<dbReference type="InterPro" id="IPR006123">
    <property type="entry name" value="Toxin_b-grasp_Staph/Strep"/>
</dbReference>
<dbReference type="InterPro" id="IPR006177">
    <property type="entry name" value="Toxin_bac"/>
</dbReference>
<dbReference type="Pfam" id="PF02876">
    <property type="entry name" value="Stap_Strp_tox_C"/>
    <property type="match status" value="1"/>
</dbReference>
<dbReference type="Pfam" id="PF01123">
    <property type="entry name" value="Stap_Strp_toxin"/>
    <property type="match status" value="1"/>
</dbReference>
<dbReference type="PRINTS" id="PR00279">
    <property type="entry name" value="BACTRLTOXIN"/>
</dbReference>
<dbReference type="PRINTS" id="PR01898">
    <property type="entry name" value="SAGSUPRFAMLY"/>
</dbReference>
<dbReference type="SUPFAM" id="SSF50203">
    <property type="entry name" value="Bacterial enterotoxins"/>
    <property type="match status" value="1"/>
</dbReference>
<dbReference type="SUPFAM" id="SSF54334">
    <property type="entry name" value="Superantigen toxins, C-terminal domain"/>
    <property type="match status" value="1"/>
</dbReference>
<dbReference type="PROSITE" id="PS00277">
    <property type="entry name" value="STAPH_STREP_TOXIN_1"/>
    <property type="match status" value="1"/>
</dbReference>
<dbReference type="PROSITE" id="PS00278">
    <property type="entry name" value="STAPH_STREP_TOXIN_2"/>
    <property type="match status" value="1"/>
</dbReference>
<feature type="signal peptide" evidence="2">
    <location>
        <begin position="1"/>
        <end position="27"/>
    </location>
</feature>
<feature type="chain" id="PRO_5002613721" description="Enterotoxin type A" evidence="2">
    <location>
        <begin position="28"/>
        <end position="257"/>
    </location>
</feature>
<feature type="binding site" evidence="1">
    <location>
        <position position="211"/>
    </location>
    <ligand>
        <name>Zn(2+)</name>
        <dbReference type="ChEBI" id="CHEBI:29105"/>
    </ligand>
</feature>
<feature type="binding site" evidence="1">
    <location>
        <position position="249"/>
    </location>
    <ligand>
        <name>Zn(2+)</name>
        <dbReference type="ChEBI" id="CHEBI:29105"/>
    </ligand>
</feature>
<feature type="binding site" evidence="1">
    <location>
        <position position="251"/>
    </location>
    <ligand>
        <name>Zn(2+)</name>
        <dbReference type="ChEBI" id="CHEBI:29105"/>
    </ligand>
</feature>
<feature type="disulfide bond" evidence="1">
    <location>
        <begin position="120"/>
        <end position="130"/>
    </location>
</feature>
<evidence type="ECO:0000250" key="1">
    <source>
        <dbReference type="UniProtKB" id="P0A0L2"/>
    </source>
</evidence>
<evidence type="ECO:0000255" key="2"/>
<evidence type="ECO:0000305" key="3"/>
<reference key="1">
    <citation type="journal article" date="2008" name="J. Bacteriol.">
        <title>Genome sequence of Staphylococcus aureus strain Newman and comparative analysis of staphylococcal genomes: polymorphism and evolution of two major pathogenicity islands.</title>
        <authorList>
            <person name="Baba T."/>
            <person name="Bae T."/>
            <person name="Schneewind O."/>
            <person name="Takeuchi F."/>
            <person name="Hiramatsu K."/>
        </authorList>
    </citation>
    <scope>NUCLEOTIDE SEQUENCE [LARGE SCALE GENOMIC DNA]</scope>
    <source>
        <strain>Newman</strain>
    </source>
</reference>
<accession>A0A0H3KHN8</accession>
<organism>
    <name type="scientific">Staphylococcus aureus (strain Newman)</name>
    <dbReference type="NCBI Taxonomy" id="426430"/>
    <lineage>
        <taxon>Bacteria</taxon>
        <taxon>Bacillati</taxon>
        <taxon>Bacillota</taxon>
        <taxon>Bacilli</taxon>
        <taxon>Bacillales</taxon>
        <taxon>Staphylococcaceae</taxon>
        <taxon>Staphylococcus</taxon>
    </lineage>
</organism>